<reference evidence="5" key="1">
    <citation type="journal article" date="2005" name="Science">
        <title>The transcriptional landscape of the mammalian genome.</title>
        <authorList>
            <person name="Carninci P."/>
            <person name="Kasukawa T."/>
            <person name="Katayama S."/>
            <person name="Gough J."/>
            <person name="Frith M.C."/>
            <person name="Maeda N."/>
            <person name="Oyama R."/>
            <person name="Ravasi T."/>
            <person name="Lenhard B."/>
            <person name="Wells C."/>
            <person name="Kodzius R."/>
            <person name="Shimokawa K."/>
            <person name="Bajic V.B."/>
            <person name="Brenner S.E."/>
            <person name="Batalov S."/>
            <person name="Forrest A.R."/>
            <person name="Zavolan M."/>
            <person name="Davis M.J."/>
            <person name="Wilming L.G."/>
            <person name="Aidinis V."/>
            <person name="Allen J.E."/>
            <person name="Ambesi-Impiombato A."/>
            <person name="Apweiler R."/>
            <person name="Aturaliya R.N."/>
            <person name="Bailey T.L."/>
            <person name="Bansal M."/>
            <person name="Baxter L."/>
            <person name="Beisel K.W."/>
            <person name="Bersano T."/>
            <person name="Bono H."/>
            <person name="Chalk A.M."/>
            <person name="Chiu K.P."/>
            <person name="Choudhary V."/>
            <person name="Christoffels A."/>
            <person name="Clutterbuck D.R."/>
            <person name="Crowe M.L."/>
            <person name="Dalla E."/>
            <person name="Dalrymple B.P."/>
            <person name="de Bono B."/>
            <person name="Della Gatta G."/>
            <person name="di Bernardo D."/>
            <person name="Down T."/>
            <person name="Engstrom P."/>
            <person name="Fagiolini M."/>
            <person name="Faulkner G."/>
            <person name="Fletcher C.F."/>
            <person name="Fukushima T."/>
            <person name="Furuno M."/>
            <person name="Futaki S."/>
            <person name="Gariboldi M."/>
            <person name="Georgii-Hemming P."/>
            <person name="Gingeras T.R."/>
            <person name="Gojobori T."/>
            <person name="Green R.E."/>
            <person name="Gustincich S."/>
            <person name="Harbers M."/>
            <person name="Hayashi Y."/>
            <person name="Hensch T.K."/>
            <person name="Hirokawa N."/>
            <person name="Hill D."/>
            <person name="Huminiecki L."/>
            <person name="Iacono M."/>
            <person name="Ikeo K."/>
            <person name="Iwama A."/>
            <person name="Ishikawa T."/>
            <person name="Jakt M."/>
            <person name="Kanapin A."/>
            <person name="Katoh M."/>
            <person name="Kawasawa Y."/>
            <person name="Kelso J."/>
            <person name="Kitamura H."/>
            <person name="Kitano H."/>
            <person name="Kollias G."/>
            <person name="Krishnan S.P."/>
            <person name="Kruger A."/>
            <person name="Kummerfeld S.K."/>
            <person name="Kurochkin I.V."/>
            <person name="Lareau L.F."/>
            <person name="Lazarevic D."/>
            <person name="Lipovich L."/>
            <person name="Liu J."/>
            <person name="Liuni S."/>
            <person name="McWilliam S."/>
            <person name="Madan Babu M."/>
            <person name="Madera M."/>
            <person name="Marchionni L."/>
            <person name="Matsuda H."/>
            <person name="Matsuzawa S."/>
            <person name="Miki H."/>
            <person name="Mignone F."/>
            <person name="Miyake S."/>
            <person name="Morris K."/>
            <person name="Mottagui-Tabar S."/>
            <person name="Mulder N."/>
            <person name="Nakano N."/>
            <person name="Nakauchi H."/>
            <person name="Ng P."/>
            <person name="Nilsson R."/>
            <person name="Nishiguchi S."/>
            <person name="Nishikawa S."/>
            <person name="Nori F."/>
            <person name="Ohara O."/>
            <person name="Okazaki Y."/>
            <person name="Orlando V."/>
            <person name="Pang K.C."/>
            <person name="Pavan W.J."/>
            <person name="Pavesi G."/>
            <person name="Pesole G."/>
            <person name="Petrovsky N."/>
            <person name="Piazza S."/>
            <person name="Reed J."/>
            <person name="Reid J.F."/>
            <person name="Ring B.Z."/>
            <person name="Ringwald M."/>
            <person name="Rost B."/>
            <person name="Ruan Y."/>
            <person name="Salzberg S.L."/>
            <person name="Sandelin A."/>
            <person name="Schneider C."/>
            <person name="Schoenbach C."/>
            <person name="Sekiguchi K."/>
            <person name="Semple C.A."/>
            <person name="Seno S."/>
            <person name="Sessa L."/>
            <person name="Sheng Y."/>
            <person name="Shibata Y."/>
            <person name="Shimada H."/>
            <person name="Shimada K."/>
            <person name="Silva D."/>
            <person name="Sinclair B."/>
            <person name="Sperling S."/>
            <person name="Stupka E."/>
            <person name="Sugiura K."/>
            <person name="Sultana R."/>
            <person name="Takenaka Y."/>
            <person name="Taki K."/>
            <person name="Tammoja K."/>
            <person name="Tan S.L."/>
            <person name="Tang S."/>
            <person name="Taylor M.S."/>
            <person name="Tegner J."/>
            <person name="Teichmann S.A."/>
            <person name="Ueda H.R."/>
            <person name="van Nimwegen E."/>
            <person name="Verardo R."/>
            <person name="Wei C.L."/>
            <person name="Yagi K."/>
            <person name="Yamanishi H."/>
            <person name="Zabarovsky E."/>
            <person name="Zhu S."/>
            <person name="Zimmer A."/>
            <person name="Hide W."/>
            <person name="Bult C."/>
            <person name="Grimmond S.M."/>
            <person name="Teasdale R.D."/>
            <person name="Liu E.T."/>
            <person name="Brusic V."/>
            <person name="Quackenbush J."/>
            <person name="Wahlestedt C."/>
            <person name="Mattick J.S."/>
            <person name="Hume D.A."/>
            <person name="Kai C."/>
            <person name="Sasaki D."/>
            <person name="Tomaru Y."/>
            <person name="Fukuda S."/>
            <person name="Kanamori-Katayama M."/>
            <person name="Suzuki M."/>
            <person name="Aoki J."/>
            <person name="Arakawa T."/>
            <person name="Iida J."/>
            <person name="Imamura K."/>
            <person name="Itoh M."/>
            <person name="Kato T."/>
            <person name="Kawaji H."/>
            <person name="Kawagashira N."/>
            <person name="Kawashima T."/>
            <person name="Kojima M."/>
            <person name="Kondo S."/>
            <person name="Konno H."/>
            <person name="Nakano K."/>
            <person name="Ninomiya N."/>
            <person name="Nishio T."/>
            <person name="Okada M."/>
            <person name="Plessy C."/>
            <person name="Shibata K."/>
            <person name="Shiraki T."/>
            <person name="Suzuki S."/>
            <person name="Tagami M."/>
            <person name="Waki K."/>
            <person name="Watahiki A."/>
            <person name="Okamura-Oho Y."/>
            <person name="Suzuki H."/>
            <person name="Kawai J."/>
            <person name="Hayashizaki Y."/>
        </authorList>
    </citation>
    <scope>NUCLEOTIDE SEQUENCE [LARGE SCALE MRNA]</scope>
    <source>
        <strain evidence="5">C57BL/6J</strain>
        <strain evidence="8">NOD</strain>
        <tissue evidence="8">Dendritic cell</tissue>
        <tissue evidence="7">Egg</tissue>
        <tissue evidence="6">Embryo</tissue>
        <tissue evidence="5">Embryonic liver</tissue>
    </source>
</reference>
<reference key="2">
    <citation type="journal article" date="2009" name="PLoS Biol.">
        <title>Lineage-specific biology revealed by a finished genome assembly of the mouse.</title>
        <authorList>
            <person name="Church D.M."/>
            <person name="Goodstadt L."/>
            <person name="Hillier L.W."/>
            <person name="Zody M.C."/>
            <person name="Goldstein S."/>
            <person name="She X."/>
            <person name="Bult C.J."/>
            <person name="Agarwala R."/>
            <person name="Cherry J.L."/>
            <person name="DiCuccio M."/>
            <person name="Hlavina W."/>
            <person name="Kapustin Y."/>
            <person name="Meric P."/>
            <person name="Maglott D."/>
            <person name="Birtle Z."/>
            <person name="Marques A.C."/>
            <person name="Graves T."/>
            <person name="Zhou S."/>
            <person name="Teague B."/>
            <person name="Potamousis K."/>
            <person name="Churas C."/>
            <person name="Place M."/>
            <person name="Herschleb J."/>
            <person name="Runnheim R."/>
            <person name="Forrest D."/>
            <person name="Amos-Landgraf J."/>
            <person name="Schwartz D.C."/>
            <person name="Cheng Z."/>
            <person name="Lindblad-Toh K."/>
            <person name="Eichler E.E."/>
            <person name="Ponting C.P."/>
        </authorList>
    </citation>
    <scope>NUCLEOTIDE SEQUENCE [LARGE SCALE GENOMIC DNA]</scope>
    <source>
        <strain>C57BL/6J</strain>
    </source>
</reference>
<reference evidence="4" key="3">
    <citation type="journal article" date="2004" name="Genome Res.">
        <title>The status, quality, and expansion of the NIH full-length cDNA project: the Mammalian Gene Collection (MGC).</title>
        <authorList>
            <consortium name="The MGC Project Team"/>
        </authorList>
    </citation>
    <scope>NUCLEOTIDE SEQUENCE [LARGE SCALE MRNA]</scope>
    <source>
        <tissue evidence="4">Mammary gland</tissue>
    </source>
</reference>
<feature type="chain" id="PRO_0000248235" description="Protein MIS12 homolog">
    <location>
        <begin position="1"/>
        <end position="206"/>
    </location>
</feature>
<feature type="coiled-coil region" evidence="2">
    <location>
        <begin position="102"/>
        <end position="206"/>
    </location>
</feature>
<feature type="sequence conflict" description="In Ref. 1; BAE20937." evidence="3" ref="1">
    <original>D</original>
    <variation>N</variation>
    <location>
        <position position="161"/>
    </location>
</feature>
<gene>
    <name evidence="9" type="primary">Mis12</name>
</gene>
<comment type="function">
    <text evidence="1">Part of the MIS12 complex which is required for normal chromosome alignment and segregation and for kinetochore formation during mitosis. Essential for proper kinetochore microtubule attachments.</text>
</comment>
<comment type="subunit">
    <text evidence="1">Component of the MIS12 complex composed of MIS12, DSN1, NSL1 and PMF1. Also interacts with KNL1, CBX3, CBX5, NDC80 and ZWINT.</text>
</comment>
<comment type="subcellular location">
    <subcellularLocation>
        <location evidence="1">Chromosome</location>
        <location evidence="1">Centromere</location>
        <location evidence="1">Kinetochore</location>
    </subcellularLocation>
    <text evidence="1">Associated with the kinetochore.</text>
</comment>
<comment type="similarity">
    <text evidence="3">Belongs to the mis12 family.</text>
</comment>
<evidence type="ECO:0000250" key="1">
    <source>
        <dbReference type="UniProtKB" id="Q9H081"/>
    </source>
</evidence>
<evidence type="ECO:0000255" key="2"/>
<evidence type="ECO:0000305" key="3"/>
<evidence type="ECO:0000312" key="4">
    <source>
        <dbReference type="EMBL" id="AAH26790.1"/>
    </source>
</evidence>
<evidence type="ECO:0000312" key="5">
    <source>
        <dbReference type="EMBL" id="BAB27314.1"/>
    </source>
</evidence>
<evidence type="ECO:0000312" key="6">
    <source>
        <dbReference type="EMBL" id="BAE20937.1"/>
    </source>
</evidence>
<evidence type="ECO:0000312" key="7">
    <source>
        <dbReference type="EMBL" id="BAE24195.1"/>
    </source>
</evidence>
<evidence type="ECO:0000312" key="8">
    <source>
        <dbReference type="EMBL" id="BAE32656.1"/>
    </source>
</evidence>
<evidence type="ECO:0000312" key="9">
    <source>
        <dbReference type="MGI" id="MGI:1914389"/>
    </source>
</evidence>
<sequence length="206" mass="24131">MSVDPMAYEAQFFGFTPQTCLLRIYVAFQDHLFEVMQAVEQVILKKLEDIPNCEITPVQTRKCTEKFLCFMKGRFDNLFGKMEQLILQSILCIPPNILLPEDKCQETNPFSEEKLELLQQEIKELQEKYKVELCTEQALLAELEEQKTVKAKLRETLTFFDELENIGRYQGTSNFRESLASLVQSCRKLQSIRDNVEKESRRLETQ</sequence>
<accession>Q9CY25</accession>
<accession>Q3V261</accession>
<accession>Q5QNU7</accession>
<accession>Q5QNU8</accession>
<accession>Q5QNU9</accession>
<protein>
    <recommendedName>
        <fullName>Protein MIS12 homolog</fullName>
    </recommendedName>
</protein>
<proteinExistence type="evidence at transcript level"/>
<dbReference type="EMBL" id="AK010995">
    <property type="protein sequence ID" value="BAB27314.1"/>
    <property type="molecule type" value="mRNA"/>
</dbReference>
<dbReference type="EMBL" id="AK132010">
    <property type="protein sequence ID" value="BAE20937.1"/>
    <property type="molecule type" value="mRNA"/>
</dbReference>
<dbReference type="EMBL" id="AK139957">
    <property type="protein sequence ID" value="BAE24195.1"/>
    <property type="molecule type" value="mRNA"/>
</dbReference>
<dbReference type="EMBL" id="AK154531">
    <property type="protein sequence ID" value="BAE32656.1"/>
    <property type="molecule type" value="mRNA"/>
</dbReference>
<dbReference type="EMBL" id="AL596136">
    <property type="status" value="NOT_ANNOTATED_CDS"/>
    <property type="molecule type" value="Genomic_DNA"/>
</dbReference>
<dbReference type="EMBL" id="BC026790">
    <property type="protein sequence ID" value="AAH26790.1"/>
    <property type="molecule type" value="mRNA"/>
</dbReference>
<dbReference type="CCDS" id="CCDS24973.1"/>
<dbReference type="RefSeq" id="NP_080269.1">
    <property type="nucleotide sequence ID" value="NM_025993.3"/>
</dbReference>
<dbReference type="RefSeq" id="XP_006534031.1">
    <property type="nucleotide sequence ID" value="XM_006533968.3"/>
</dbReference>
<dbReference type="RefSeq" id="XP_006534032.1">
    <property type="nucleotide sequence ID" value="XM_006533969.3"/>
</dbReference>
<dbReference type="SMR" id="Q9CY25"/>
<dbReference type="BioGRID" id="211970">
    <property type="interactions" value="84"/>
</dbReference>
<dbReference type="ComplexPortal" id="CPX-5701">
    <property type="entry name" value="Kinetochore MIS12 complex"/>
</dbReference>
<dbReference type="FunCoup" id="Q9CY25">
    <property type="interactions" value="1894"/>
</dbReference>
<dbReference type="IntAct" id="Q9CY25">
    <property type="interactions" value="87"/>
</dbReference>
<dbReference type="MINT" id="Q9CY25"/>
<dbReference type="STRING" id="10090.ENSMUSP00000039500"/>
<dbReference type="iPTMnet" id="Q9CY25"/>
<dbReference type="PhosphoSitePlus" id="Q9CY25"/>
<dbReference type="PaxDb" id="10090-ENSMUSP00000039500"/>
<dbReference type="PeptideAtlas" id="Q9CY25"/>
<dbReference type="ProteomicsDB" id="295617"/>
<dbReference type="Pumba" id="Q9CY25"/>
<dbReference type="Antibodypedia" id="23713">
    <property type="antibodies" value="171 antibodies from 25 providers"/>
</dbReference>
<dbReference type="Ensembl" id="ENSMUST00000048807.12">
    <property type="protein sequence ID" value="ENSMUSP00000039500.6"/>
    <property type="gene ID" value="ENSMUSG00000040599.14"/>
</dbReference>
<dbReference type="Ensembl" id="ENSMUST00000164220.8">
    <property type="protein sequence ID" value="ENSMUSP00000127782.2"/>
    <property type="gene ID" value="ENSMUSG00000040599.14"/>
</dbReference>
<dbReference type="GeneID" id="67139"/>
<dbReference type="KEGG" id="mmu:67139"/>
<dbReference type="UCSC" id="uc007jxm.1">
    <property type="organism name" value="mouse"/>
</dbReference>
<dbReference type="AGR" id="MGI:1914389"/>
<dbReference type="CTD" id="79003"/>
<dbReference type="MGI" id="MGI:1914389">
    <property type="gene designation" value="Mis12"/>
</dbReference>
<dbReference type="VEuPathDB" id="HostDB:ENSMUSG00000040599"/>
<dbReference type="eggNOG" id="ENOG502RXZ1">
    <property type="taxonomic scope" value="Eukaryota"/>
</dbReference>
<dbReference type="GeneTree" id="ENSGT00390000018665"/>
<dbReference type="HOGENOM" id="CLU_097032_0_0_1"/>
<dbReference type="InParanoid" id="Q9CY25"/>
<dbReference type="OMA" id="DYLFEMM"/>
<dbReference type="OrthoDB" id="1884855at2759"/>
<dbReference type="PhylomeDB" id="Q9CY25"/>
<dbReference type="TreeFam" id="TF101136"/>
<dbReference type="Reactome" id="R-MMU-141444">
    <property type="pathway name" value="Amplification of signal from unattached kinetochores via a MAD2 inhibitory signal"/>
</dbReference>
<dbReference type="Reactome" id="R-MMU-2467813">
    <property type="pathway name" value="Separation of Sister Chromatids"/>
</dbReference>
<dbReference type="Reactome" id="R-MMU-2500257">
    <property type="pathway name" value="Resolution of Sister Chromatid Cohesion"/>
</dbReference>
<dbReference type="Reactome" id="R-MMU-5663220">
    <property type="pathway name" value="RHO GTPases Activate Formins"/>
</dbReference>
<dbReference type="Reactome" id="R-MMU-68877">
    <property type="pathway name" value="Mitotic Prometaphase"/>
</dbReference>
<dbReference type="Reactome" id="R-MMU-9648025">
    <property type="pathway name" value="EML4 and NUDC in mitotic spindle formation"/>
</dbReference>
<dbReference type="BioGRID-ORCS" id="67139">
    <property type="hits" value="22 hits in 78 CRISPR screens"/>
</dbReference>
<dbReference type="ChiTaRS" id="Mis12">
    <property type="organism name" value="mouse"/>
</dbReference>
<dbReference type="PRO" id="PR:Q9CY25"/>
<dbReference type="Proteomes" id="UP000000589">
    <property type="component" value="Chromosome 11"/>
</dbReference>
<dbReference type="RNAct" id="Q9CY25">
    <property type="molecule type" value="protein"/>
</dbReference>
<dbReference type="Bgee" id="ENSMUSG00000040599">
    <property type="expression patterns" value="Expressed in ear vesicle and 247 other cell types or tissues"/>
</dbReference>
<dbReference type="ExpressionAtlas" id="Q9CY25">
    <property type="expression patterns" value="baseline and differential"/>
</dbReference>
<dbReference type="GO" id="GO:0000775">
    <property type="term" value="C:chromosome, centromeric region"/>
    <property type="evidence" value="ECO:0000266"/>
    <property type="project" value="MGI"/>
</dbReference>
<dbReference type="GO" id="GO:0000776">
    <property type="term" value="C:kinetochore"/>
    <property type="evidence" value="ECO:0000303"/>
    <property type="project" value="ComplexPortal"/>
</dbReference>
<dbReference type="GO" id="GO:0000444">
    <property type="term" value="C:MIS12/MIND type complex"/>
    <property type="evidence" value="ECO:0000250"/>
    <property type="project" value="UniProtKB"/>
</dbReference>
<dbReference type="GO" id="GO:0005634">
    <property type="term" value="C:nucleus"/>
    <property type="evidence" value="ECO:0000303"/>
    <property type="project" value="ComplexPortal"/>
</dbReference>
<dbReference type="GO" id="GO:0000922">
    <property type="term" value="C:spindle pole"/>
    <property type="evidence" value="ECO:0000303"/>
    <property type="project" value="ComplexPortal"/>
</dbReference>
<dbReference type="GO" id="GO:0051315">
    <property type="term" value="P:attachment of mitotic spindle microtubules to kinetochore"/>
    <property type="evidence" value="ECO:0000250"/>
    <property type="project" value="UniProtKB"/>
</dbReference>
<dbReference type="GO" id="GO:0008608">
    <property type="term" value="P:attachment of spindle microtubules to kinetochore"/>
    <property type="evidence" value="ECO:0000303"/>
    <property type="project" value="ComplexPortal"/>
</dbReference>
<dbReference type="GO" id="GO:0051301">
    <property type="term" value="P:cell division"/>
    <property type="evidence" value="ECO:0007669"/>
    <property type="project" value="UniProtKB-KW"/>
</dbReference>
<dbReference type="GO" id="GO:0007059">
    <property type="term" value="P:chromosome segregation"/>
    <property type="evidence" value="ECO:0000250"/>
    <property type="project" value="UniProtKB"/>
</dbReference>
<dbReference type="GO" id="GO:0051382">
    <property type="term" value="P:kinetochore assembly"/>
    <property type="evidence" value="ECO:0000250"/>
    <property type="project" value="UniProtKB"/>
</dbReference>
<dbReference type="InterPro" id="IPR008685">
    <property type="entry name" value="Centromere_Mis12"/>
</dbReference>
<dbReference type="PANTHER" id="PTHR14527">
    <property type="entry name" value="PROTEIN MIS12 HOMOLOG"/>
    <property type="match status" value="1"/>
</dbReference>
<dbReference type="PANTHER" id="PTHR14527:SF2">
    <property type="entry name" value="PROTEIN MIS12 HOMOLOG"/>
    <property type="match status" value="1"/>
</dbReference>
<dbReference type="Pfam" id="PF05859">
    <property type="entry name" value="Mis12"/>
    <property type="match status" value="1"/>
</dbReference>
<keyword id="KW-0131">Cell cycle</keyword>
<keyword id="KW-0132">Cell division</keyword>
<keyword id="KW-0137">Centromere</keyword>
<keyword id="KW-0158">Chromosome</keyword>
<keyword id="KW-0159">Chromosome partition</keyword>
<keyword id="KW-0175">Coiled coil</keyword>
<keyword id="KW-0995">Kinetochore</keyword>
<keyword id="KW-0498">Mitosis</keyword>
<keyword id="KW-1185">Reference proteome</keyword>
<name>MIS12_MOUSE</name>
<organism>
    <name type="scientific">Mus musculus</name>
    <name type="common">Mouse</name>
    <dbReference type="NCBI Taxonomy" id="10090"/>
    <lineage>
        <taxon>Eukaryota</taxon>
        <taxon>Metazoa</taxon>
        <taxon>Chordata</taxon>
        <taxon>Craniata</taxon>
        <taxon>Vertebrata</taxon>
        <taxon>Euteleostomi</taxon>
        <taxon>Mammalia</taxon>
        <taxon>Eutheria</taxon>
        <taxon>Euarchontoglires</taxon>
        <taxon>Glires</taxon>
        <taxon>Rodentia</taxon>
        <taxon>Myomorpha</taxon>
        <taxon>Muroidea</taxon>
        <taxon>Muridae</taxon>
        <taxon>Murinae</taxon>
        <taxon>Mus</taxon>
        <taxon>Mus</taxon>
    </lineage>
</organism>